<organism>
    <name type="scientific">Bordetella parapertussis (strain 12822 / ATCC BAA-587 / NCTC 13253)</name>
    <dbReference type="NCBI Taxonomy" id="257311"/>
    <lineage>
        <taxon>Bacteria</taxon>
        <taxon>Pseudomonadati</taxon>
        <taxon>Pseudomonadota</taxon>
        <taxon>Betaproteobacteria</taxon>
        <taxon>Burkholderiales</taxon>
        <taxon>Alcaligenaceae</taxon>
        <taxon>Bordetella</taxon>
    </lineage>
</organism>
<evidence type="ECO:0000255" key="1">
    <source>
        <dbReference type="HAMAP-Rule" id="MF_00183"/>
    </source>
</evidence>
<sequence length="399" mass="42113">MTRFQRVAVLGSTGSIGDSTLDVIARHPDRLGVYALSAYSRMDKLAAQAAACGAAVVVVPDDAAAARFRAAWRGKAAMPEVRVGPRTLAETAAAPECTTVMAAIVGAAGLPAALAAAQAGKRVLLANKEALVAAGSLFMAAVRENGAELLPIDSEHNAIFQCMPQGARAAAPTAPAPGVRRLLLTASGGPFRRQDPADLHEVTPAQACAHPNWSMGRKISVDSATMLNKGLEVIEAHWLFAMPSERIDVLIHPQSVVHSMVEYDDGSVLAQLGQPDMRTPIAYGLGFPERLASGVGLLDLTRWGRLDFEQPDLQRFPCLALSFAALRAGQPACVALNAANEVAVAAFLEGRLRYTWVARVIEAVLEWQAKQASVTLTSLDDVLDLDARARSFAGNLGLA</sequence>
<comment type="function">
    <text evidence="1">Catalyzes the NADPH-dependent rearrangement and reduction of 1-deoxy-D-xylulose-5-phosphate (DXP) to 2-C-methyl-D-erythritol 4-phosphate (MEP).</text>
</comment>
<comment type="catalytic activity">
    <reaction evidence="1">
        <text>2-C-methyl-D-erythritol 4-phosphate + NADP(+) = 1-deoxy-D-xylulose 5-phosphate + NADPH + H(+)</text>
        <dbReference type="Rhea" id="RHEA:13717"/>
        <dbReference type="ChEBI" id="CHEBI:15378"/>
        <dbReference type="ChEBI" id="CHEBI:57783"/>
        <dbReference type="ChEBI" id="CHEBI:57792"/>
        <dbReference type="ChEBI" id="CHEBI:58262"/>
        <dbReference type="ChEBI" id="CHEBI:58349"/>
        <dbReference type="EC" id="1.1.1.267"/>
    </reaction>
    <physiologicalReaction direction="right-to-left" evidence="1">
        <dbReference type="Rhea" id="RHEA:13719"/>
    </physiologicalReaction>
</comment>
<comment type="cofactor">
    <cofactor evidence="1">
        <name>Mg(2+)</name>
        <dbReference type="ChEBI" id="CHEBI:18420"/>
    </cofactor>
    <cofactor evidence="1">
        <name>Mn(2+)</name>
        <dbReference type="ChEBI" id="CHEBI:29035"/>
    </cofactor>
</comment>
<comment type="pathway">
    <text evidence="1">Isoprenoid biosynthesis; isopentenyl diphosphate biosynthesis via DXP pathway; isopentenyl diphosphate from 1-deoxy-D-xylulose 5-phosphate: step 1/6.</text>
</comment>
<comment type="similarity">
    <text evidence="1">Belongs to the DXR family.</text>
</comment>
<dbReference type="EC" id="1.1.1.267" evidence="1"/>
<dbReference type="EMBL" id="BX640427">
    <property type="protein sequence ID" value="CAE36835.1"/>
    <property type="molecule type" value="Genomic_DNA"/>
</dbReference>
<dbReference type="RefSeq" id="WP_010928081.1">
    <property type="nucleotide sequence ID" value="NC_002928.3"/>
</dbReference>
<dbReference type="SMR" id="Q7WA54"/>
<dbReference type="GeneID" id="93203292"/>
<dbReference type="KEGG" id="bpa:BPP1533"/>
<dbReference type="HOGENOM" id="CLU_035714_4_0_4"/>
<dbReference type="UniPathway" id="UPA00056">
    <property type="reaction ID" value="UER00092"/>
</dbReference>
<dbReference type="Proteomes" id="UP000001421">
    <property type="component" value="Chromosome"/>
</dbReference>
<dbReference type="GO" id="GO:0030604">
    <property type="term" value="F:1-deoxy-D-xylulose-5-phosphate reductoisomerase activity"/>
    <property type="evidence" value="ECO:0007669"/>
    <property type="project" value="UniProtKB-UniRule"/>
</dbReference>
<dbReference type="GO" id="GO:0030145">
    <property type="term" value="F:manganese ion binding"/>
    <property type="evidence" value="ECO:0007669"/>
    <property type="project" value="TreeGrafter"/>
</dbReference>
<dbReference type="GO" id="GO:0070402">
    <property type="term" value="F:NADPH binding"/>
    <property type="evidence" value="ECO:0007669"/>
    <property type="project" value="InterPro"/>
</dbReference>
<dbReference type="GO" id="GO:0051484">
    <property type="term" value="P:isopentenyl diphosphate biosynthetic process, methylerythritol 4-phosphate pathway involved in terpenoid biosynthetic process"/>
    <property type="evidence" value="ECO:0007669"/>
    <property type="project" value="TreeGrafter"/>
</dbReference>
<dbReference type="FunFam" id="3.40.50.720:FF:000045">
    <property type="entry name" value="1-deoxy-D-xylulose 5-phosphate reductoisomerase"/>
    <property type="match status" value="1"/>
</dbReference>
<dbReference type="Gene3D" id="1.10.1740.10">
    <property type="match status" value="1"/>
</dbReference>
<dbReference type="Gene3D" id="3.40.50.720">
    <property type="entry name" value="NAD(P)-binding Rossmann-like Domain"/>
    <property type="match status" value="1"/>
</dbReference>
<dbReference type="HAMAP" id="MF_00183">
    <property type="entry name" value="DXP_reductoisom"/>
    <property type="match status" value="1"/>
</dbReference>
<dbReference type="InterPro" id="IPR003821">
    <property type="entry name" value="DXP_reductoisomerase"/>
</dbReference>
<dbReference type="InterPro" id="IPR013644">
    <property type="entry name" value="DXP_reductoisomerase_C"/>
</dbReference>
<dbReference type="InterPro" id="IPR013512">
    <property type="entry name" value="DXP_reductoisomerase_N"/>
</dbReference>
<dbReference type="InterPro" id="IPR026877">
    <property type="entry name" value="DXPR_C"/>
</dbReference>
<dbReference type="InterPro" id="IPR036169">
    <property type="entry name" value="DXPR_C_sf"/>
</dbReference>
<dbReference type="InterPro" id="IPR036291">
    <property type="entry name" value="NAD(P)-bd_dom_sf"/>
</dbReference>
<dbReference type="NCBIfam" id="TIGR00243">
    <property type="entry name" value="Dxr"/>
    <property type="match status" value="1"/>
</dbReference>
<dbReference type="NCBIfam" id="NF009114">
    <property type="entry name" value="PRK12464.1"/>
    <property type="match status" value="1"/>
</dbReference>
<dbReference type="PANTHER" id="PTHR30525">
    <property type="entry name" value="1-DEOXY-D-XYLULOSE 5-PHOSPHATE REDUCTOISOMERASE"/>
    <property type="match status" value="1"/>
</dbReference>
<dbReference type="PANTHER" id="PTHR30525:SF0">
    <property type="entry name" value="1-DEOXY-D-XYLULOSE 5-PHOSPHATE REDUCTOISOMERASE, CHLOROPLASTIC"/>
    <property type="match status" value="1"/>
</dbReference>
<dbReference type="Pfam" id="PF08436">
    <property type="entry name" value="DXP_redisom_C"/>
    <property type="match status" value="1"/>
</dbReference>
<dbReference type="Pfam" id="PF02670">
    <property type="entry name" value="DXP_reductoisom"/>
    <property type="match status" value="1"/>
</dbReference>
<dbReference type="Pfam" id="PF13288">
    <property type="entry name" value="DXPR_C"/>
    <property type="match status" value="1"/>
</dbReference>
<dbReference type="PIRSF" id="PIRSF006205">
    <property type="entry name" value="Dxp_reductismrs"/>
    <property type="match status" value="1"/>
</dbReference>
<dbReference type="SUPFAM" id="SSF69055">
    <property type="entry name" value="1-deoxy-D-xylulose-5-phosphate reductoisomerase, C-terminal domain"/>
    <property type="match status" value="1"/>
</dbReference>
<dbReference type="SUPFAM" id="SSF55347">
    <property type="entry name" value="Glyceraldehyde-3-phosphate dehydrogenase-like, C-terminal domain"/>
    <property type="match status" value="1"/>
</dbReference>
<dbReference type="SUPFAM" id="SSF51735">
    <property type="entry name" value="NAD(P)-binding Rossmann-fold domains"/>
    <property type="match status" value="1"/>
</dbReference>
<reference key="1">
    <citation type="journal article" date="2003" name="Nat. Genet.">
        <title>Comparative analysis of the genome sequences of Bordetella pertussis, Bordetella parapertussis and Bordetella bronchiseptica.</title>
        <authorList>
            <person name="Parkhill J."/>
            <person name="Sebaihia M."/>
            <person name="Preston A."/>
            <person name="Murphy L.D."/>
            <person name="Thomson N.R."/>
            <person name="Harris D.E."/>
            <person name="Holden M.T.G."/>
            <person name="Churcher C.M."/>
            <person name="Bentley S.D."/>
            <person name="Mungall K.L."/>
            <person name="Cerdeno-Tarraga A.-M."/>
            <person name="Temple L."/>
            <person name="James K.D."/>
            <person name="Harris B."/>
            <person name="Quail M.A."/>
            <person name="Achtman M."/>
            <person name="Atkin R."/>
            <person name="Baker S."/>
            <person name="Basham D."/>
            <person name="Bason N."/>
            <person name="Cherevach I."/>
            <person name="Chillingworth T."/>
            <person name="Collins M."/>
            <person name="Cronin A."/>
            <person name="Davis P."/>
            <person name="Doggett J."/>
            <person name="Feltwell T."/>
            <person name="Goble A."/>
            <person name="Hamlin N."/>
            <person name="Hauser H."/>
            <person name="Holroyd S."/>
            <person name="Jagels K."/>
            <person name="Leather S."/>
            <person name="Moule S."/>
            <person name="Norberczak H."/>
            <person name="O'Neil S."/>
            <person name="Ormond D."/>
            <person name="Price C."/>
            <person name="Rabbinowitsch E."/>
            <person name="Rutter S."/>
            <person name="Sanders M."/>
            <person name="Saunders D."/>
            <person name="Seeger K."/>
            <person name="Sharp S."/>
            <person name="Simmonds M."/>
            <person name="Skelton J."/>
            <person name="Squares R."/>
            <person name="Squares S."/>
            <person name="Stevens K."/>
            <person name="Unwin L."/>
            <person name="Whitehead S."/>
            <person name="Barrell B.G."/>
            <person name="Maskell D.J."/>
        </authorList>
    </citation>
    <scope>NUCLEOTIDE SEQUENCE [LARGE SCALE GENOMIC DNA]</scope>
    <source>
        <strain>12822 / ATCC BAA-587 / NCTC 13253</strain>
    </source>
</reference>
<proteinExistence type="inferred from homology"/>
<gene>
    <name evidence="1" type="primary">dxr</name>
    <name type="ordered locus">BPP1533</name>
</gene>
<accession>Q7WA54</accession>
<protein>
    <recommendedName>
        <fullName evidence="1">1-deoxy-D-xylulose 5-phosphate reductoisomerase</fullName>
        <shortName evidence="1">DXP reductoisomerase</shortName>
        <ecNumber evidence="1">1.1.1.267</ecNumber>
    </recommendedName>
    <alternativeName>
        <fullName evidence="1">1-deoxyxylulose-5-phosphate reductoisomerase</fullName>
    </alternativeName>
    <alternativeName>
        <fullName evidence="1">2-C-methyl-D-erythritol 4-phosphate synthase</fullName>
    </alternativeName>
</protein>
<name>DXR_BORPA</name>
<feature type="chain" id="PRO_0000163619" description="1-deoxy-D-xylulose 5-phosphate reductoisomerase">
    <location>
        <begin position="1"/>
        <end position="399"/>
    </location>
</feature>
<feature type="binding site" evidence="1">
    <location>
        <position position="13"/>
    </location>
    <ligand>
        <name>NADPH</name>
        <dbReference type="ChEBI" id="CHEBI:57783"/>
    </ligand>
</feature>
<feature type="binding site" evidence="1">
    <location>
        <position position="14"/>
    </location>
    <ligand>
        <name>NADPH</name>
        <dbReference type="ChEBI" id="CHEBI:57783"/>
    </ligand>
</feature>
<feature type="binding site" evidence="1">
    <location>
        <position position="15"/>
    </location>
    <ligand>
        <name>NADPH</name>
        <dbReference type="ChEBI" id="CHEBI:57783"/>
    </ligand>
</feature>
<feature type="binding site" evidence="1">
    <location>
        <position position="16"/>
    </location>
    <ligand>
        <name>NADPH</name>
        <dbReference type="ChEBI" id="CHEBI:57783"/>
    </ligand>
</feature>
<feature type="binding site" evidence="1">
    <location>
        <position position="127"/>
    </location>
    <ligand>
        <name>NADPH</name>
        <dbReference type="ChEBI" id="CHEBI:57783"/>
    </ligand>
</feature>
<feature type="binding site" evidence="1">
    <location>
        <position position="128"/>
    </location>
    <ligand>
        <name>1-deoxy-D-xylulose 5-phosphate</name>
        <dbReference type="ChEBI" id="CHEBI:57792"/>
    </ligand>
</feature>
<feature type="binding site" evidence="1">
    <location>
        <position position="129"/>
    </location>
    <ligand>
        <name>NADPH</name>
        <dbReference type="ChEBI" id="CHEBI:57783"/>
    </ligand>
</feature>
<feature type="binding site" evidence="1">
    <location>
        <position position="153"/>
    </location>
    <ligand>
        <name>Mn(2+)</name>
        <dbReference type="ChEBI" id="CHEBI:29035"/>
    </ligand>
</feature>
<feature type="binding site" evidence="1">
    <location>
        <position position="154"/>
    </location>
    <ligand>
        <name>1-deoxy-D-xylulose 5-phosphate</name>
        <dbReference type="ChEBI" id="CHEBI:57792"/>
    </ligand>
</feature>
<feature type="binding site" evidence="1">
    <location>
        <position position="155"/>
    </location>
    <ligand>
        <name>1-deoxy-D-xylulose 5-phosphate</name>
        <dbReference type="ChEBI" id="CHEBI:57792"/>
    </ligand>
</feature>
<feature type="binding site" evidence="1">
    <location>
        <position position="155"/>
    </location>
    <ligand>
        <name>Mn(2+)</name>
        <dbReference type="ChEBI" id="CHEBI:29035"/>
    </ligand>
</feature>
<feature type="binding site" evidence="1">
    <location>
        <position position="187"/>
    </location>
    <ligand>
        <name>1-deoxy-D-xylulose 5-phosphate</name>
        <dbReference type="ChEBI" id="CHEBI:57792"/>
    </ligand>
</feature>
<feature type="binding site" evidence="1">
    <location>
        <position position="210"/>
    </location>
    <ligand>
        <name>1-deoxy-D-xylulose 5-phosphate</name>
        <dbReference type="ChEBI" id="CHEBI:57792"/>
    </ligand>
</feature>
<feature type="binding site" evidence="1">
    <location>
        <position position="216"/>
    </location>
    <ligand>
        <name>NADPH</name>
        <dbReference type="ChEBI" id="CHEBI:57783"/>
    </ligand>
</feature>
<feature type="binding site" evidence="1">
    <location>
        <position position="223"/>
    </location>
    <ligand>
        <name>1-deoxy-D-xylulose 5-phosphate</name>
        <dbReference type="ChEBI" id="CHEBI:57792"/>
    </ligand>
</feature>
<feature type="binding site" evidence="1">
    <location>
        <position position="228"/>
    </location>
    <ligand>
        <name>1-deoxy-D-xylulose 5-phosphate</name>
        <dbReference type="ChEBI" id="CHEBI:57792"/>
    </ligand>
</feature>
<feature type="binding site" evidence="1">
    <location>
        <position position="229"/>
    </location>
    <ligand>
        <name>1-deoxy-D-xylulose 5-phosphate</name>
        <dbReference type="ChEBI" id="CHEBI:57792"/>
    </ligand>
</feature>
<feature type="binding site" evidence="1">
    <location>
        <position position="232"/>
    </location>
    <ligand>
        <name>1-deoxy-D-xylulose 5-phosphate</name>
        <dbReference type="ChEBI" id="CHEBI:57792"/>
    </ligand>
</feature>
<feature type="binding site" evidence="1">
    <location>
        <position position="232"/>
    </location>
    <ligand>
        <name>Mn(2+)</name>
        <dbReference type="ChEBI" id="CHEBI:29035"/>
    </ligand>
</feature>
<keyword id="KW-0414">Isoprene biosynthesis</keyword>
<keyword id="KW-0464">Manganese</keyword>
<keyword id="KW-0479">Metal-binding</keyword>
<keyword id="KW-0521">NADP</keyword>
<keyword id="KW-0560">Oxidoreductase</keyword>